<keyword id="KW-0067">ATP-binding</keyword>
<keyword id="KW-0472">Membrane</keyword>
<keyword id="KW-0547">Nucleotide-binding</keyword>
<keyword id="KW-1185">Reference proteome</keyword>
<keyword id="KW-0677">Repeat</keyword>
<keyword id="KW-0812">Transmembrane</keyword>
<keyword id="KW-1133">Transmembrane helix</keyword>
<keyword id="KW-0813">Transport</keyword>
<protein>
    <recommendedName>
        <fullName>ABC transporter G family member 5</fullName>
    </recommendedName>
    <alternativeName>
        <fullName>ABC transporter ABCG.5</fullName>
    </alternativeName>
</protein>
<name>ABCG5_DICDI</name>
<comment type="subcellular location">
    <subcellularLocation>
        <location evidence="1">Membrane</location>
        <topology evidence="1">Multi-pass membrane protein</topology>
    </subcellularLocation>
</comment>
<comment type="similarity">
    <text evidence="5">Belongs to the ABC transporter superfamily. ABCG family. PDR (TC 3.A.1.205) subfamily.</text>
</comment>
<organism>
    <name type="scientific">Dictyostelium discoideum</name>
    <name type="common">Social amoeba</name>
    <dbReference type="NCBI Taxonomy" id="44689"/>
    <lineage>
        <taxon>Eukaryota</taxon>
        <taxon>Amoebozoa</taxon>
        <taxon>Evosea</taxon>
        <taxon>Eumycetozoa</taxon>
        <taxon>Dictyostelia</taxon>
        <taxon>Dictyosteliales</taxon>
        <taxon>Dictyosteliaceae</taxon>
        <taxon>Dictyostelium</taxon>
    </lineage>
</organism>
<feature type="chain" id="PRO_0000330363" description="ABC transporter G family member 5">
    <location>
        <begin position="1"/>
        <end position="1509"/>
    </location>
</feature>
<feature type="transmembrane region" description="Helical" evidence="2">
    <location>
        <begin position="477"/>
        <end position="497"/>
    </location>
</feature>
<feature type="transmembrane region" description="Helical" evidence="2">
    <location>
        <begin position="512"/>
        <end position="532"/>
    </location>
</feature>
<feature type="transmembrane region" description="Helical" evidence="2">
    <location>
        <begin position="557"/>
        <end position="577"/>
    </location>
</feature>
<feature type="transmembrane region" description="Helical" evidence="2">
    <location>
        <begin position="583"/>
        <end position="603"/>
    </location>
</feature>
<feature type="transmembrane region" description="Helical" evidence="2">
    <location>
        <begin position="616"/>
        <end position="636"/>
    </location>
</feature>
<feature type="transmembrane region" description="Helical" evidence="2">
    <location>
        <begin position="643"/>
        <end position="663"/>
    </location>
</feature>
<feature type="transmembrane region" description="Helical" evidence="2">
    <location>
        <begin position="725"/>
        <end position="745"/>
    </location>
</feature>
<feature type="transmembrane region" description="Helical" evidence="2">
    <location>
        <begin position="1236"/>
        <end position="1256"/>
    </location>
</feature>
<feature type="transmembrane region" description="Helical" evidence="2">
    <location>
        <begin position="1271"/>
        <end position="1291"/>
    </location>
</feature>
<feature type="transmembrane region" description="Helical" evidence="2">
    <location>
        <begin position="1320"/>
        <end position="1340"/>
    </location>
</feature>
<feature type="transmembrane region" description="Helical" evidence="2">
    <location>
        <begin position="1352"/>
        <end position="1372"/>
    </location>
</feature>
<feature type="transmembrane region" description="Helical" evidence="2">
    <location>
        <begin position="1379"/>
        <end position="1399"/>
    </location>
</feature>
<feature type="transmembrane region" description="Helical" evidence="2">
    <location>
        <begin position="1481"/>
        <end position="1501"/>
    </location>
</feature>
<feature type="domain" description="ABC transporter 1" evidence="3">
    <location>
        <begin position="129"/>
        <end position="376"/>
    </location>
</feature>
<feature type="domain" description="ABC transmembrane type-2 1">
    <location>
        <begin position="472"/>
        <end position="748"/>
    </location>
</feature>
<feature type="domain" description="ABC transporter 2" evidence="3">
    <location>
        <begin position="888"/>
        <end position="1141"/>
    </location>
</feature>
<feature type="domain" description="ABC transmembrane type-2 2">
    <location>
        <begin position="1231"/>
        <end position="1504"/>
    </location>
</feature>
<feature type="region of interest" description="Disordered" evidence="4">
    <location>
        <begin position="1"/>
        <end position="70"/>
    </location>
</feature>
<feature type="region of interest" description="Disordered" evidence="4">
    <location>
        <begin position="813"/>
        <end position="881"/>
    </location>
</feature>
<feature type="compositionally biased region" description="Basic and acidic residues" evidence="4">
    <location>
        <begin position="1"/>
        <end position="10"/>
    </location>
</feature>
<feature type="compositionally biased region" description="Polar residues" evidence="4">
    <location>
        <begin position="11"/>
        <end position="28"/>
    </location>
</feature>
<feature type="compositionally biased region" description="Low complexity" evidence="4">
    <location>
        <begin position="29"/>
        <end position="66"/>
    </location>
</feature>
<feature type="compositionally biased region" description="Low complexity" evidence="4">
    <location>
        <begin position="813"/>
        <end position="831"/>
    </location>
</feature>
<feature type="compositionally biased region" description="Polar residues" evidence="4">
    <location>
        <begin position="839"/>
        <end position="881"/>
    </location>
</feature>
<feature type="binding site" evidence="3">
    <location>
        <begin position="168"/>
        <end position="175"/>
    </location>
    <ligand>
        <name>ATP</name>
        <dbReference type="ChEBI" id="CHEBI:30616"/>
        <label>1</label>
    </ligand>
</feature>
<feature type="binding site" evidence="3">
    <location>
        <begin position="935"/>
        <end position="942"/>
    </location>
    <ligand>
        <name>ATP</name>
        <dbReference type="ChEBI" id="CHEBI:30616"/>
        <label>2</label>
    </ligand>
</feature>
<feature type="sequence conflict" description="In Ref. 1; AAL91490." evidence="5" ref="1">
    <original>T</original>
    <variation>P</variation>
    <location>
        <position position="137"/>
    </location>
</feature>
<feature type="sequence conflict" description="In Ref. 1; AAL91490." evidence="5" ref="1">
    <original>F</original>
    <variation>L</variation>
    <location>
        <position position="510"/>
    </location>
</feature>
<feature type="sequence conflict" description="In Ref. 1; AAL91490." evidence="5" ref="1">
    <original>E</original>
    <variation>Q</variation>
    <location>
        <position position="1160"/>
    </location>
</feature>
<feature type="sequence conflict" description="In Ref. 1; AAL91490." evidence="5" ref="1">
    <original>EH</original>
    <variation>VP</variation>
    <location>
        <begin position="1172"/>
        <end position="1173"/>
    </location>
</feature>
<feature type="sequence conflict" description="In Ref. 1; AAL91490." evidence="5" ref="1">
    <original>N</original>
    <variation>D</variation>
    <location>
        <position position="1184"/>
    </location>
</feature>
<feature type="sequence conflict" description="In Ref. 1; AAL91490." evidence="5" ref="1">
    <original>V</original>
    <variation>I</variation>
    <location>
        <position position="1204"/>
    </location>
</feature>
<feature type="sequence conflict" description="In Ref. 1; AAL91490." evidence="5" ref="1">
    <original>V</original>
    <variation>I</variation>
    <location>
        <position position="1504"/>
    </location>
</feature>
<feature type="sequence conflict" description="In Ref. 1; AAL91490." evidence="5" ref="1">
    <original>L</original>
    <variation>F</variation>
    <location>
        <position position="1507"/>
    </location>
</feature>
<gene>
    <name type="primary">abcG5</name>
    <name type="ORF">DDB_G0281391</name>
</gene>
<accession>Q54TV2</accession>
<accession>Q8T688</accession>
<evidence type="ECO:0000250" key="1"/>
<evidence type="ECO:0000255" key="2"/>
<evidence type="ECO:0000255" key="3">
    <source>
        <dbReference type="PROSITE-ProRule" id="PRU00434"/>
    </source>
</evidence>
<evidence type="ECO:0000256" key="4">
    <source>
        <dbReference type="SAM" id="MobiDB-lite"/>
    </source>
</evidence>
<evidence type="ECO:0000305" key="5"/>
<sequence>MVKQDPRDKSSYSPNLSIPINNQEEPTLNNNNNNNNNNNNNNNNNNNNNNNNNNNNNNNKNNNNNNIKHKDEENDFEDSIYQIAKEHEGEEDDEYFPIPLDELMPNHENDELTKKIKQTRPEDKTGLYVYCRNATYTVKHRENKKVKIKLLDDVSFFLRPKQMTLILGTPGCGKSTIFQMLAGQLKDKHFEGELLFNGHPINHKNHHRDISYVTQDDIHVPTLTVKETFRFALDCLGKKELTREEKQVSVDNCMKLLGLKHAENTLVGDNFIRGISGGQKKRVTIGVGVIKGSNLLLMDEPTSGLDSSTSFEILSDVKKFVTYGYSPALITLLQPSVQLTSLFDNLMIMSKGKICYFGPMNRALGYFKKLGFACPSHNNPAEFFQEVVDAPERYSFIHPPKCKTSDDFVKAYRESDIYLELMEKMDANKDGIVDDNKPKVLVDSTAKELGMYPHGIGYQTKICLKRGFIMISRNYYNFATRVFKGIFFGLLLGTLYWRIGHNQSGGMERFGLLFFIMTTIIFSSFAAVNSFFGERKVFYSQKALHYYKTGAYFISSIICDIPAGLIEVAFFGPIVYWLANLRPVFIRFVYFMILLFITDNLSLSFAKMCAAISPTIEIANVTASVILSIWLLFSGFTAPKNDIGGWWIWLYYISPYTWIFQGLSINEFTYQAYGCKDSELIPPRTPQNLLPYPEGFGGNQVCQYTSGEQIMDAFGINNPDYFKWIVYAILGAYIVFFYSVCFFALKYLNFEDKKSKLAVKKLKKKKKVIVCKEDEEPNCKVTTEALERVSDDNDDNADISNYDDDTVIDMKSPLTSPNYNNNNNLSGSGNNIKRRKVKTPSTLSPMVNSPLTNLSPMVNTPSKNGNHSKQKPISTSQKDISSETGSYLQFKKLCYAVDVKADDPDNPKKKKSQRLQLLTDIDGYVKPGQMLALMGPSGAGKSTLLDVLAQRKTGGHITGEILINGKPPSEFTNRIRAYVEQMDVLPPTQTVREAIAFSARCRLPPEVTKEEREIFVDKIVEVLSLSSIKDLKIGVLGNGLSVSQRKRVNIGVELASNPEILFLDEPTSGLDSGDAFKVIDVVNKIAKVMNRTVICTVHQPSAAIFEFFDQLLLLKKGGETIYFGPLGNQSSVILDYCDKLGMHIKPHINPADFVMTLADEGKMVEGPNGEQEHLDAKKAYFESNICKKEYEIMEGQLIPDDFVVKTYDSRFASSWMTQFRALCMRSWLSRLRRPAIFVSNCLRSILLAVLLGTLFVRMDYEQKDARSRVSLLFFSFLFAGMVAIGNIPTTVLERGVFYREVTAGFYHSTAYMISYVLTSYPFILSTGILYIIPTFWIAGLDSGRHSSKFWYCLFIFIITYIMYDAFALCLAVCLPNEVMASTICGIGLSLATLFGGFVIARPNYPSAYYWCHYLDWLRYPLEASCTNEFTGLTFVCTNNKGAVPIPIIENGVQIAIKYYCPITNGDDFMLTYGFHKFMRYIDIAAIFGYIFIFVGLSFWGFKKVRWLNR</sequence>
<reference key="1">
    <citation type="journal article" date="2002" name="Eukaryot. Cell">
        <title>Evolutionary analyses of ABC transporters of Dictyostelium discoideum.</title>
        <authorList>
            <person name="Anjard C."/>
            <person name="Loomis W.F."/>
        </authorList>
    </citation>
    <scope>NUCLEOTIDE SEQUENCE [GENOMIC DNA]</scope>
    <scope>NOMENCLATURE</scope>
    <source>
        <strain>AX4</strain>
    </source>
</reference>
<reference key="2">
    <citation type="journal article" date="2005" name="Nature">
        <title>The genome of the social amoeba Dictyostelium discoideum.</title>
        <authorList>
            <person name="Eichinger L."/>
            <person name="Pachebat J.A."/>
            <person name="Gloeckner G."/>
            <person name="Rajandream M.A."/>
            <person name="Sucgang R."/>
            <person name="Berriman M."/>
            <person name="Song J."/>
            <person name="Olsen R."/>
            <person name="Szafranski K."/>
            <person name="Xu Q."/>
            <person name="Tunggal B."/>
            <person name="Kummerfeld S."/>
            <person name="Madera M."/>
            <person name="Konfortov B.A."/>
            <person name="Rivero F."/>
            <person name="Bankier A.T."/>
            <person name="Lehmann R."/>
            <person name="Hamlin N."/>
            <person name="Davies R."/>
            <person name="Gaudet P."/>
            <person name="Fey P."/>
            <person name="Pilcher K."/>
            <person name="Chen G."/>
            <person name="Saunders D."/>
            <person name="Sodergren E.J."/>
            <person name="Davis P."/>
            <person name="Kerhornou A."/>
            <person name="Nie X."/>
            <person name="Hall N."/>
            <person name="Anjard C."/>
            <person name="Hemphill L."/>
            <person name="Bason N."/>
            <person name="Farbrother P."/>
            <person name="Desany B."/>
            <person name="Just E."/>
            <person name="Morio T."/>
            <person name="Rost R."/>
            <person name="Churcher C.M."/>
            <person name="Cooper J."/>
            <person name="Haydock S."/>
            <person name="van Driessche N."/>
            <person name="Cronin A."/>
            <person name="Goodhead I."/>
            <person name="Muzny D.M."/>
            <person name="Mourier T."/>
            <person name="Pain A."/>
            <person name="Lu M."/>
            <person name="Harper D."/>
            <person name="Lindsay R."/>
            <person name="Hauser H."/>
            <person name="James K.D."/>
            <person name="Quiles M."/>
            <person name="Madan Babu M."/>
            <person name="Saito T."/>
            <person name="Buchrieser C."/>
            <person name="Wardroper A."/>
            <person name="Felder M."/>
            <person name="Thangavelu M."/>
            <person name="Johnson D."/>
            <person name="Knights A."/>
            <person name="Loulseged H."/>
            <person name="Mungall K.L."/>
            <person name="Oliver K."/>
            <person name="Price C."/>
            <person name="Quail M.A."/>
            <person name="Urushihara H."/>
            <person name="Hernandez J."/>
            <person name="Rabbinowitsch E."/>
            <person name="Steffen D."/>
            <person name="Sanders M."/>
            <person name="Ma J."/>
            <person name="Kohara Y."/>
            <person name="Sharp S."/>
            <person name="Simmonds M.N."/>
            <person name="Spiegler S."/>
            <person name="Tivey A."/>
            <person name="Sugano S."/>
            <person name="White B."/>
            <person name="Walker D."/>
            <person name="Woodward J.R."/>
            <person name="Winckler T."/>
            <person name="Tanaka Y."/>
            <person name="Shaulsky G."/>
            <person name="Schleicher M."/>
            <person name="Weinstock G.M."/>
            <person name="Rosenthal A."/>
            <person name="Cox E.C."/>
            <person name="Chisholm R.L."/>
            <person name="Gibbs R.A."/>
            <person name="Loomis W.F."/>
            <person name="Platzer M."/>
            <person name="Kay R.R."/>
            <person name="Williams J.G."/>
            <person name="Dear P.H."/>
            <person name="Noegel A.A."/>
            <person name="Barrell B.G."/>
            <person name="Kuspa A."/>
        </authorList>
    </citation>
    <scope>NUCLEOTIDE SEQUENCE [LARGE SCALE GENOMIC DNA]</scope>
    <source>
        <strain>AX4</strain>
    </source>
</reference>
<dbReference type="EMBL" id="AF482384">
    <property type="protein sequence ID" value="AAL91490.1"/>
    <property type="molecule type" value="Genomic_DNA"/>
</dbReference>
<dbReference type="EMBL" id="AAFI02000041">
    <property type="protein sequence ID" value="EAL66677.1"/>
    <property type="molecule type" value="Genomic_DNA"/>
</dbReference>
<dbReference type="RefSeq" id="XP_640709.1">
    <property type="nucleotide sequence ID" value="XM_635617.1"/>
</dbReference>
<dbReference type="SMR" id="Q54TV2"/>
<dbReference type="FunCoup" id="Q54TV2">
    <property type="interactions" value="5"/>
</dbReference>
<dbReference type="STRING" id="44689.Q54TV2"/>
<dbReference type="PaxDb" id="44689-DDB0215344"/>
<dbReference type="EnsemblProtists" id="EAL66677">
    <property type="protein sequence ID" value="EAL66677"/>
    <property type="gene ID" value="DDB_G0281391"/>
</dbReference>
<dbReference type="GeneID" id="8623096"/>
<dbReference type="KEGG" id="ddi:DDB_G0281391"/>
<dbReference type="dictyBase" id="DDB_G0281391">
    <property type="gene designation" value="abcG5"/>
</dbReference>
<dbReference type="VEuPathDB" id="AmoebaDB:DDB_G0281391"/>
<dbReference type="eggNOG" id="KOG0065">
    <property type="taxonomic scope" value="Eukaryota"/>
</dbReference>
<dbReference type="HOGENOM" id="CLU_000604_35_3_1"/>
<dbReference type="InParanoid" id="Q54TV2"/>
<dbReference type="OMA" id="EMNGIYM"/>
<dbReference type="PhylomeDB" id="Q54TV2"/>
<dbReference type="PRO" id="PR:Q54TV2"/>
<dbReference type="Proteomes" id="UP000002195">
    <property type="component" value="Chromosome 3"/>
</dbReference>
<dbReference type="GO" id="GO:0016020">
    <property type="term" value="C:membrane"/>
    <property type="evidence" value="ECO:0007669"/>
    <property type="project" value="UniProtKB-SubCell"/>
</dbReference>
<dbReference type="GO" id="GO:0140359">
    <property type="term" value="F:ABC-type transporter activity"/>
    <property type="evidence" value="ECO:0007669"/>
    <property type="project" value="InterPro"/>
</dbReference>
<dbReference type="GO" id="GO:0005524">
    <property type="term" value="F:ATP binding"/>
    <property type="evidence" value="ECO:0007669"/>
    <property type="project" value="UniProtKB-KW"/>
</dbReference>
<dbReference type="GO" id="GO:0016887">
    <property type="term" value="F:ATP hydrolysis activity"/>
    <property type="evidence" value="ECO:0007669"/>
    <property type="project" value="InterPro"/>
</dbReference>
<dbReference type="GO" id="GO:0042626">
    <property type="term" value="F:ATPase-coupled transmembrane transporter activity"/>
    <property type="evidence" value="ECO:0000317"/>
    <property type="project" value="dictyBase"/>
</dbReference>
<dbReference type="GO" id="GO:0031152">
    <property type="term" value="P:aggregation involved in sorocarp development"/>
    <property type="evidence" value="ECO:0000318"/>
    <property type="project" value="GO_Central"/>
</dbReference>
<dbReference type="GO" id="GO:0031154">
    <property type="term" value="P:culmination involved in sorocarp development"/>
    <property type="evidence" value="ECO:0000315"/>
    <property type="project" value="dictyBase"/>
</dbReference>
<dbReference type="GO" id="GO:0031288">
    <property type="term" value="P:sorocarp morphogenesis"/>
    <property type="evidence" value="ECO:0000318"/>
    <property type="project" value="GO_Central"/>
</dbReference>
<dbReference type="CDD" id="cd03232">
    <property type="entry name" value="ABCG_PDR_domain2"/>
    <property type="match status" value="1"/>
</dbReference>
<dbReference type="FunFam" id="3.40.50.300:FF:002639">
    <property type="entry name" value="ABC transporter G family protein"/>
    <property type="match status" value="1"/>
</dbReference>
<dbReference type="Gene3D" id="3.40.50.300">
    <property type="entry name" value="P-loop containing nucleotide triphosphate hydrolases"/>
    <property type="match status" value="2"/>
</dbReference>
<dbReference type="InterPro" id="IPR003593">
    <property type="entry name" value="AAA+_ATPase"/>
</dbReference>
<dbReference type="InterPro" id="IPR013525">
    <property type="entry name" value="ABC2_TM"/>
</dbReference>
<dbReference type="InterPro" id="IPR003439">
    <property type="entry name" value="ABC_transporter-like_ATP-bd"/>
</dbReference>
<dbReference type="InterPro" id="IPR017871">
    <property type="entry name" value="ABC_transporter-like_CS"/>
</dbReference>
<dbReference type="InterPro" id="IPR043926">
    <property type="entry name" value="ABCG_dom"/>
</dbReference>
<dbReference type="InterPro" id="IPR034003">
    <property type="entry name" value="ABCG_PDR_2"/>
</dbReference>
<dbReference type="InterPro" id="IPR027417">
    <property type="entry name" value="P-loop_NTPase"/>
</dbReference>
<dbReference type="InterPro" id="IPR013581">
    <property type="entry name" value="PDR_assoc"/>
</dbReference>
<dbReference type="PANTHER" id="PTHR19241">
    <property type="entry name" value="ATP-BINDING CASSETTE TRANSPORTER"/>
    <property type="match status" value="1"/>
</dbReference>
<dbReference type="Pfam" id="PF01061">
    <property type="entry name" value="ABC2_membrane"/>
    <property type="match status" value="2"/>
</dbReference>
<dbReference type="Pfam" id="PF19055">
    <property type="entry name" value="ABC2_membrane_7"/>
    <property type="match status" value="2"/>
</dbReference>
<dbReference type="Pfam" id="PF00005">
    <property type="entry name" value="ABC_tran"/>
    <property type="match status" value="2"/>
</dbReference>
<dbReference type="Pfam" id="PF08370">
    <property type="entry name" value="PDR_assoc"/>
    <property type="match status" value="1"/>
</dbReference>
<dbReference type="SMART" id="SM00382">
    <property type="entry name" value="AAA"/>
    <property type="match status" value="2"/>
</dbReference>
<dbReference type="SUPFAM" id="SSF52540">
    <property type="entry name" value="P-loop containing nucleoside triphosphate hydrolases"/>
    <property type="match status" value="3"/>
</dbReference>
<dbReference type="PROSITE" id="PS00211">
    <property type="entry name" value="ABC_TRANSPORTER_1"/>
    <property type="match status" value="1"/>
</dbReference>
<dbReference type="PROSITE" id="PS50893">
    <property type="entry name" value="ABC_TRANSPORTER_2"/>
    <property type="match status" value="2"/>
</dbReference>
<proteinExistence type="inferred from homology"/>